<name>NIG2B_ODOGR</name>
<keyword id="KW-0044">Antibiotic</keyword>
<keyword id="KW-0929">Antimicrobial</keyword>
<keyword id="KW-0204">Cytolysis</keyword>
<keyword id="KW-0903">Direct protein sequencing</keyword>
<keyword id="KW-0295">Fungicide</keyword>
<keyword id="KW-0354">Hemolysis</keyword>
<keyword id="KW-0964">Secreted</keyword>
<accession>C0HL73</accession>
<feature type="peptide" id="PRO_0000443436" description="Nigrocin-2GRb" evidence="2">
    <location>
        <begin position="1"/>
        <end position="21"/>
    </location>
</feature>
<sequence>GLFGKILGVGKKVLCGLSGMC</sequence>
<dbReference type="GO" id="GO:0005576">
    <property type="term" value="C:extracellular region"/>
    <property type="evidence" value="ECO:0007669"/>
    <property type="project" value="UniProtKB-SubCell"/>
</dbReference>
<dbReference type="GO" id="GO:0051715">
    <property type="term" value="P:cytolysis in another organism"/>
    <property type="evidence" value="ECO:0000314"/>
    <property type="project" value="UniProtKB"/>
</dbReference>
<dbReference type="GO" id="GO:0050832">
    <property type="term" value="P:defense response to fungus"/>
    <property type="evidence" value="ECO:0000314"/>
    <property type="project" value="UniProtKB"/>
</dbReference>
<dbReference type="GO" id="GO:0050829">
    <property type="term" value="P:defense response to Gram-negative bacterium"/>
    <property type="evidence" value="ECO:0000314"/>
    <property type="project" value="UniProtKB"/>
</dbReference>
<dbReference type="GO" id="GO:0050830">
    <property type="term" value="P:defense response to Gram-positive bacterium"/>
    <property type="evidence" value="ECO:0000314"/>
    <property type="project" value="UniProtKB"/>
</dbReference>
<dbReference type="GO" id="GO:0031640">
    <property type="term" value="P:killing of cells of another organism"/>
    <property type="evidence" value="ECO:0000314"/>
    <property type="project" value="UniProtKB"/>
</dbReference>
<dbReference type="InterPro" id="IPR032749">
    <property type="entry name" value="Nigrocin"/>
</dbReference>
<dbReference type="Pfam" id="PF16047">
    <property type="entry name" value="Antimicrobial22"/>
    <property type="match status" value="1"/>
</dbReference>
<evidence type="ECO:0000250" key="1">
    <source>
        <dbReference type="UniProtKB" id="P85071"/>
    </source>
</evidence>
<evidence type="ECO:0000269" key="2">
    <source>
    </source>
</evidence>
<evidence type="ECO:0000303" key="3">
    <source>
    </source>
</evidence>
<evidence type="ECO:0000305" key="4"/>
<evidence type="ECO:0000305" key="5">
    <source>
    </source>
</evidence>
<comment type="function">
    <text evidence="2">Antimicrobial peptide active against the Gram-positive bacterium S.aureus (MIC=12.5 uM) and against the Gram-negative bacteria E.coli (MIC=3 uM). Has antifungal activity against C.albicans (MIC=50 uM). Has some hemolytic activity against human erythrocytes (LC(50)=40 uM).</text>
</comment>
<comment type="subcellular location">
    <subcellularLocation>
        <location evidence="1">Secreted</location>
    </subcellularLocation>
</comment>
<comment type="tissue specificity">
    <text evidence="5">Expressed by the skin glands.</text>
</comment>
<comment type="mass spectrometry"/>
<comment type="similarity">
    <text evidence="4">Belongs to the frog skin active peptide (FSAP) family. Brevinin subfamily.</text>
</comment>
<protein>
    <recommendedName>
        <fullName evidence="3">Nigrocin-2GRb</fullName>
    </recommendedName>
</protein>
<organism evidence="3">
    <name type="scientific">Odorrana grahami</name>
    <name type="common">Yunnanfu frog</name>
    <name type="synonym">Rana grahami</name>
    <dbReference type="NCBI Taxonomy" id="167935"/>
    <lineage>
        <taxon>Eukaryota</taxon>
        <taxon>Metazoa</taxon>
        <taxon>Chordata</taxon>
        <taxon>Craniata</taxon>
        <taxon>Vertebrata</taxon>
        <taxon>Euteleostomi</taxon>
        <taxon>Amphibia</taxon>
        <taxon>Batrachia</taxon>
        <taxon>Anura</taxon>
        <taxon>Neobatrachia</taxon>
        <taxon>Ranoidea</taxon>
        <taxon>Ranidae</taxon>
        <taxon>Odorrana</taxon>
    </lineage>
</organism>
<reference evidence="4" key="1">
    <citation type="journal article" date="2006" name="Peptides">
        <title>Antimicrobial peptides from diverse families isolated from the skin of the Asian frog, Rana grahami.</title>
        <authorList>
            <person name="Conlon J.M."/>
            <person name="Al-Ghaferi N."/>
            <person name="Abraham B."/>
            <person name="Jiansheng H."/>
            <person name="Cosette P."/>
            <person name="Leprince J."/>
            <person name="Jouenne T."/>
            <person name="Vaudry H."/>
        </authorList>
    </citation>
    <scope>PROTEIN SEQUENCE</scope>
    <scope>FUNCTION</scope>
    <scope>MASS SPECTROMETRY</scope>
    <source>
        <tissue evidence="3">Skin</tissue>
    </source>
</reference>
<proteinExistence type="evidence at protein level"/>